<proteinExistence type="predicted"/>
<dbReference type="EMBL" id="Y08501">
    <property type="protein sequence ID" value="CAA69805.1"/>
    <property type="molecule type" value="Genomic_DNA"/>
</dbReference>
<dbReference type="EMBL" id="BK010421">
    <property type="status" value="NOT_ANNOTATED_CDS"/>
    <property type="molecule type" value="Genomic_DNA"/>
</dbReference>
<dbReference type="RefSeq" id="NP_085574.1">
    <property type="nucleotide sequence ID" value="NC_001284.2"/>
</dbReference>
<dbReference type="STRING" id="3702.P92552"/>
<dbReference type="GlyGen" id="P92552">
    <property type="glycosylation" value="1 site"/>
</dbReference>
<dbReference type="PaxDb" id="3702-ATMG01220.1"/>
<dbReference type="EnsemblPlants" id="ATMG01220.1">
    <property type="protein sequence ID" value="ATMG01220.1"/>
    <property type="gene ID" value="ATMG01220"/>
</dbReference>
<dbReference type="Gramene" id="ATMG01220.1">
    <property type="protein sequence ID" value="ATMG01220.1"/>
    <property type="gene ID" value="ATMG01220"/>
</dbReference>
<dbReference type="Araport" id="ATMG01220"/>
<dbReference type="TAIR" id="ATMG01220">
    <property type="gene designation" value="ORF113"/>
</dbReference>
<dbReference type="HOGENOM" id="CLU_2136939_0_0_1"/>
<dbReference type="InParanoid" id="P92552"/>
<dbReference type="PRO" id="PR:P92552"/>
<dbReference type="Proteomes" id="UP000006548">
    <property type="component" value="Mitochondrion MT"/>
</dbReference>
<dbReference type="ExpressionAtlas" id="P92552">
    <property type="expression patterns" value="baseline and differential"/>
</dbReference>
<dbReference type="GO" id="GO:0005739">
    <property type="term" value="C:mitochondrion"/>
    <property type="evidence" value="ECO:0007669"/>
    <property type="project" value="UniProtKB-SubCell"/>
</dbReference>
<sequence>MKRYATMLSEFTGVVPSTFLSKLFLKCEINLSIGRVQDRKEPYRQAKSAVRLHGLNNTQYCTGRIRFAARSIPQSPLVPFRLFPQFPTPSVRQNLTTLHFDTREEDRALVSSG</sequence>
<accession>P92552</accession>
<accession>Q1ZXW5</accession>
<reference key="1">
    <citation type="journal article" date="1997" name="Nat. Genet.">
        <title>The mitochondrial genome of Arabidopsis thaliana contains 57 genes in 366,924 nucleotides.</title>
        <authorList>
            <person name="Unseld M."/>
            <person name="Marienfeld J.R."/>
            <person name="Brandt P."/>
            <person name="Brennicke A."/>
        </authorList>
    </citation>
    <scope>NUCLEOTIDE SEQUENCE [LARGE SCALE GENOMIC DNA]</scope>
    <source>
        <strain>cv. C24</strain>
    </source>
</reference>
<reference key="2">
    <citation type="journal article" date="2018" name="Plant Cell">
        <title>Correction of persistent errors in Arabidopsis reference mitochondrial genomes.</title>
        <authorList>
            <person name="Sloan D.B."/>
            <person name="Wu Z."/>
            <person name="Sharbrough J."/>
        </authorList>
    </citation>
    <scope>NUCLEOTIDE SEQUENCE [LARGE SCALE GENOMIC DNA]</scope>
    <source>
        <strain>cv. Columbia</strain>
    </source>
</reference>
<geneLocation type="mitochondrion"/>
<comment type="subcellular location">
    <subcellularLocation>
        <location evidence="1">Mitochondrion</location>
    </subcellularLocation>
</comment>
<organism>
    <name type="scientific">Arabidopsis thaliana</name>
    <name type="common">Mouse-ear cress</name>
    <dbReference type="NCBI Taxonomy" id="3702"/>
    <lineage>
        <taxon>Eukaryota</taxon>
        <taxon>Viridiplantae</taxon>
        <taxon>Streptophyta</taxon>
        <taxon>Embryophyta</taxon>
        <taxon>Tracheophyta</taxon>
        <taxon>Spermatophyta</taxon>
        <taxon>Magnoliopsida</taxon>
        <taxon>eudicotyledons</taxon>
        <taxon>Gunneridae</taxon>
        <taxon>Pentapetalae</taxon>
        <taxon>rosids</taxon>
        <taxon>malvids</taxon>
        <taxon>Brassicales</taxon>
        <taxon>Brassicaceae</taxon>
        <taxon>Camelineae</taxon>
        <taxon>Arabidopsis</taxon>
    </lineage>
</organism>
<feature type="chain" id="PRO_0000196818" description="Uncharacterized mitochondrial protein AtMg01220">
    <location>
        <begin position="1"/>
        <end position="113"/>
    </location>
</feature>
<protein>
    <recommendedName>
        <fullName>Uncharacterized mitochondrial protein AtMg01220</fullName>
    </recommendedName>
    <alternativeName>
        <fullName>ORF113</fullName>
    </alternativeName>
</protein>
<name>M1220_ARATH</name>
<evidence type="ECO:0000305" key="1"/>
<gene>
    <name type="ordered locus">AtMg01220</name>
</gene>
<keyword id="KW-0496">Mitochondrion</keyword>
<keyword id="KW-1185">Reference proteome</keyword>